<gene>
    <name evidence="1" type="primary">rplQ</name>
    <name type="ordered locus">MSC_0720</name>
</gene>
<sequence length="119" mass="13896">MSYIQKRGQNTAWRTALMRNLTTELIINESLEVTQTRAKELRRHFDHMITLAKRGDLHSRRQAASWLRDIDADKKETALQKLFNKLAKKYENRNGGYTSILKLDNRKGDNAPMVIIKLI</sequence>
<comment type="subunit">
    <text evidence="1">Part of the 50S ribosomal subunit. Contacts protein L32.</text>
</comment>
<comment type="similarity">
    <text evidence="1">Belongs to the bacterial ribosomal protein bL17 family.</text>
</comment>
<organism>
    <name type="scientific">Mycoplasma mycoides subsp. mycoides SC (strain CCUG 32753 / NCTC 10114 / PG1)</name>
    <dbReference type="NCBI Taxonomy" id="272632"/>
    <lineage>
        <taxon>Bacteria</taxon>
        <taxon>Bacillati</taxon>
        <taxon>Mycoplasmatota</taxon>
        <taxon>Mollicutes</taxon>
        <taxon>Mycoplasmataceae</taxon>
        <taxon>Mycoplasma</taxon>
    </lineage>
</organism>
<proteinExistence type="inferred from homology"/>
<name>RL17_MYCMS</name>
<reference key="1">
    <citation type="journal article" date="2004" name="Genome Res.">
        <title>The genome sequence of Mycoplasma mycoides subsp. mycoides SC type strain PG1T, the causative agent of contagious bovine pleuropneumonia (CBPP).</title>
        <authorList>
            <person name="Westberg J."/>
            <person name="Persson A."/>
            <person name="Holmberg A."/>
            <person name="Goesmann A."/>
            <person name="Lundeberg J."/>
            <person name="Johansson K.-E."/>
            <person name="Pettersson B."/>
            <person name="Uhlen M."/>
        </authorList>
    </citation>
    <scope>NUCLEOTIDE SEQUENCE [LARGE SCALE GENOMIC DNA]</scope>
    <source>
        <strain>CCUG 32753 / NCTC 10114 / PG1</strain>
    </source>
</reference>
<dbReference type="EMBL" id="BX293980">
    <property type="protein sequence ID" value="CAE77338.1"/>
    <property type="molecule type" value="Genomic_DNA"/>
</dbReference>
<dbReference type="RefSeq" id="NP_975696.1">
    <property type="nucleotide sequence ID" value="NC_005364.2"/>
</dbReference>
<dbReference type="RefSeq" id="WP_011166889.1">
    <property type="nucleotide sequence ID" value="NC_005364.2"/>
</dbReference>
<dbReference type="SMR" id="Q6MSQ0"/>
<dbReference type="STRING" id="272632.MSC_0720"/>
<dbReference type="GeneID" id="93426159"/>
<dbReference type="KEGG" id="mmy:MSC_0720"/>
<dbReference type="PATRIC" id="fig|272632.4.peg.775"/>
<dbReference type="eggNOG" id="COG0203">
    <property type="taxonomic scope" value="Bacteria"/>
</dbReference>
<dbReference type="HOGENOM" id="CLU_074407_2_2_14"/>
<dbReference type="PRO" id="PR:Q6MSQ0"/>
<dbReference type="Proteomes" id="UP000001016">
    <property type="component" value="Chromosome"/>
</dbReference>
<dbReference type="GO" id="GO:0022625">
    <property type="term" value="C:cytosolic large ribosomal subunit"/>
    <property type="evidence" value="ECO:0007669"/>
    <property type="project" value="TreeGrafter"/>
</dbReference>
<dbReference type="GO" id="GO:0003735">
    <property type="term" value="F:structural constituent of ribosome"/>
    <property type="evidence" value="ECO:0007669"/>
    <property type="project" value="InterPro"/>
</dbReference>
<dbReference type="GO" id="GO:0006412">
    <property type="term" value="P:translation"/>
    <property type="evidence" value="ECO:0007669"/>
    <property type="project" value="UniProtKB-UniRule"/>
</dbReference>
<dbReference type="Gene3D" id="3.90.1030.10">
    <property type="entry name" value="Ribosomal protein L17"/>
    <property type="match status" value="1"/>
</dbReference>
<dbReference type="HAMAP" id="MF_01368">
    <property type="entry name" value="Ribosomal_bL17"/>
    <property type="match status" value="1"/>
</dbReference>
<dbReference type="InterPro" id="IPR000456">
    <property type="entry name" value="Ribosomal_bL17"/>
</dbReference>
<dbReference type="InterPro" id="IPR047859">
    <property type="entry name" value="Ribosomal_bL17_CS"/>
</dbReference>
<dbReference type="InterPro" id="IPR036373">
    <property type="entry name" value="Ribosomal_bL17_sf"/>
</dbReference>
<dbReference type="NCBIfam" id="TIGR00059">
    <property type="entry name" value="L17"/>
    <property type="match status" value="1"/>
</dbReference>
<dbReference type="PANTHER" id="PTHR14413:SF16">
    <property type="entry name" value="LARGE RIBOSOMAL SUBUNIT PROTEIN BL17M"/>
    <property type="match status" value="1"/>
</dbReference>
<dbReference type="PANTHER" id="PTHR14413">
    <property type="entry name" value="RIBOSOMAL PROTEIN L17"/>
    <property type="match status" value="1"/>
</dbReference>
<dbReference type="Pfam" id="PF01196">
    <property type="entry name" value="Ribosomal_L17"/>
    <property type="match status" value="1"/>
</dbReference>
<dbReference type="SUPFAM" id="SSF64263">
    <property type="entry name" value="Prokaryotic ribosomal protein L17"/>
    <property type="match status" value="1"/>
</dbReference>
<dbReference type="PROSITE" id="PS01167">
    <property type="entry name" value="RIBOSOMAL_L17"/>
    <property type="match status" value="1"/>
</dbReference>
<evidence type="ECO:0000255" key="1">
    <source>
        <dbReference type="HAMAP-Rule" id="MF_01368"/>
    </source>
</evidence>
<evidence type="ECO:0000305" key="2"/>
<protein>
    <recommendedName>
        <fullName evidence="1">Large ribosomal subunit protein bL17</fullName>
    </recommendedName>
    <alternativeName>
        <fullName evidence="2">50S ribosomal protein L17</fullName>
    </alternativeName>
</protein>
<feature type="chain" id="PRO_1000055877" description="Large ribosomal subunit protein bL17">
    <location>
        <begin position="1"/>
        <end position="119"/>
    </location>
</feature>
<accession>Q6MSQ0</accession>
<keyword id="KW-1185">Reference proteome</keyword>
<keyword id="KW-0687">Ribonucleoprotein</keyword>
<keyword id="KW-0689">Ribosomal protein</keyword>